<feature type="chain" id="PRO_0000184279" description="Ribosomal RNA small subunit methyltransferase G">
    <location>
        <begin position="1"/>
        <end position="205"/>
    </location>
</feature>
<feature type="binding site" evidence="1">
    <location>
        <position position="70"/>
    </location>
    <ligand>
        <name>S-adenosyl-L-methionine</name>
        <dbReference type="ChEBI" id="CHEBI:59789"/>
    </ligand>
</feature>
<feature type="binding site" evidence="1">
    <location>
        <position position="75"/>
    </location>
    <ligand>
        <name>S-adenosyl-L-methionine</name>
        <dbReference type="ChEBI" id="CHEBI:59789"/>
    </ligand>
</feature>
<feature type="binding site" evidence="1">
    <location>
        <begin position="121"/>
        <end position="122"/>
    </location>
    <ligand>
        <name>S-adenosyl-L-methionine</name>
        <dbReference type="ChEBI" id="CHEBI:59789"/>
    </ligand>
</feature>
<feature type="binding site" evidence="1">
    <location>
        <position position="136"/>
    </location>
    <ligand>
        <name>S-adenosyl-L-methionine</name>
        <dbReference type="ChEBI" id="CHEBI:59789"/>
    </ligand>
</feature>
<keyword id="KW-0963">Cytoplasm</keyword>
<keyword id="KW-0489">Methyltransferase</keyword>
<keyword id="KW-1185">Reference proteome</keyword>
<keyword id="KW-0698">rRNA processing</keyword>
<keyword id="KW-0949">S-adenosyl-L-methionine</keyword>
<keyword id="KW-0808">Transferase</keyword>
<organism>
    <name type="scientific">Methylococcus capsulatus (strain ATCC 33009 / NCIMB 11132 / Bath)</name>
    <dbReference type="NCBI Taxonomy" id="243233"/>
    <lineage>
        <taxon>Bacteria</taxon>
        <taxon>Pseudomonadati</taxon>
        <taxon>Pseudomonadota</taxon>
        <taxon>Gammaproteobacteria</taxon>
        <taxon>Methylococcales</taxon>
        <taxon>Methylococcaceae</taxon>
        <taxon>Methylococcus</taxon>
    </lineage>
</organism>
<gene>
    <name evidence="1" type="primary">rsmG</name>
    <name type="ordered locus">MCA0002</name>
</gene>
<comment type="function">
    <text evidence="1">Specifically methylates the N7 position of guanine in position 527 of 16S rRNA.</text>
</comment>
<comment type="catalytic activity">
    <reaction evidence="1">
        <text>guanosine(527) in 16S rRNA + S-adenosyl-L-methionine = N(7)-methylguanosine(527) in 16S rRNA + S-adenosyl-L-homocysteine</text>
        <dbReference type="Rhea" id="RHEA:42732"/>
        <dbReference type="Rhea" id="RHEA-COMP:10209"/>
        <dbReference type="Rhea" id="RHEA-COMP:10210"/>
        <dbReference type="ChEBI" id="CHEBI:57856"/>
        <dbReference type="ChEBI" id="CHEBI:59789"/>
        <dbReference type="ChEBI" id="CHEBI:74269"/>
        <dbReference type="ChEBI" id="CHEBI:74480"/>
        <dbReference type="EC" id="2.1.1.170"/>
    </reaction>
</comment>
<comment type="subcellular location">
    <subcellularLocation>
        <location evidence="1">Cytoplasm</location>
    </subcellularLocation>
</comment>
<comment type="similarity">
    <text evidence="1">Belongs to the methyltransferase superfamily. RNA methyltransferase RsmG family.</text>
</comment>
<evidence type="ECO:0000255" key="1">
    <source>
        <dbReference type="HAMAP-Rule" id="MF_00074"/>
    </source>
</evidence>
<sequence>MLERGLSELGSDAGGDQRERLLRFLELLRKWNRVYSLTAIEDPCEGVRLHLLDSLSIASFLHGRRVLDVGTGPGLPGIPLAIVQPERRFVLLDCNAKKIRFVRQAVIELGLANVVPVQARIESFTDAEGFDCVLARAYASLAEIWTDAAPLLRTGGTVLALKGRRPEAELGDLPAGVAVGIHRLRVPGVEAERHLAELKPTGQDS</sequence>
<dbReference type="EC" id="2.1.1.170" evidence="1"/>
<dbReference type="EMBL" id="AE017282">
    <property type="protein sequence ID" value="AAU90761.1"/>
    <property type="molecule type" value="Genomic_DNA"/>
</dbReference>
<dbReference type="SMR" id="Q60CS4"/>
<dbReference type="STRING" id="243233.MCA0002"/>
<dbReference type="KEGG" id="mca:MCA0002"/>
<dbReference type="eggNOG" id="COG0357">
    <property type="taxonomic scope" value="Bacteria"/>
</dbReference>
<dbReference type="HOGENOM" id="CLU_065341_2_0_6"/>
<dbReference type="Proteomes" id="UP000006821">
    <property type="component" value="Chromosome"/>
</dbReference>
<dbReference type="GO" id="GO:0005829">
    <property type="term" value="C:cytosol"/>
    <property type="evidence" value="ECO:0007669"/>
    <property type="project" value="TreeGrafter"/>
</dbReference>
<dbReference type="GO" id="GO:0070043">
    <property type="term" value="F:rRNA (guanine-N7-)-methyltransferase activity"/>
    <property type="evidence" value="ECO:0007669"/>
    <property type="project" value="UniProtKB-UniRule"/>
</dbReference>
<dbReference type="CDD" id="cd02440">
    <property type="entry name" value="AdoMet_MTases"/>
    <property type="match status" value="1"/>
</dbReference>
<dbReference type="Gene3D" id="3.40.50.150">
    <property type="entry name" value="Vaccinia Virus protein VP39"/>
    <property type="match status" value="1"/>
</dbReference>
<dbReference type="HAMAP" id="MF_00074">
    <property type="entry name" value="16SrRNA_methyltr_G"/>
    <property type="match status" value="1"/>
</dbReference>
<dbReference type="InterPro" id="IPR003682">
    <property type="entry name" value="rRNA_ssu_MeTfrase_G"/>
</dbReference>
<dbReference type="InterPro" id="IPR029063">
    <property type="entry name" value="SAM-dependent_MTases_sf"/>
</dbReference>
<dbReference type="NCBIfam" id="TIGR00138">
    <property type="entry name" value="rsmG_gidB"/>
    <property type="match status" value="1"/>
</dbReference>
<dbReference type="PANTHER" id="PTHR31760">
    <property type="entry name" value="S-ADENOSYL-L-METHIONINE-DEPENDENT METHYLTRANSFERASES SUPERFAMILY PROTEIN"/>
    <property type="match status" value="1"/>
</dbReference>
<dbReference type="PANTHER" id="PTHR31760:SF0">
    <property type="entry name" value="S-ADENOSYL-L-METHIONINE-DEPENDENT METHYLTRANSFERASES SUPERFAMILY PROTEIN"/>
    <property type="match status" value="1"/>
</dbReference>
<dbReference type="Pfam" id="PF02527">
    <property type="entry name" value="GidB"/>
    <property type="match status" value="1"/>
</dbReference>
<dbReference type="PIRSF" id="PIRSF003078">
    <property type="entry name" value="GidB"/>
    <property type="match status" value="1"/>
</dbReference>
<dbReference type="SUPFAM" id="SSF53335">
    <property type="entry name" value="S-adenosyl-L-methionine-dependent methyltransferases"/>
    <property type="match status" value="1"/>
</dbReference>
<proteinExistence type="inferred from homology"/>
<name>RSMG_METCA</name>
<reference key="1">
    <citation type="journal article" date="2004" name="PLoS Biol.">
        <title>Genomic insights into methanotrophy: the complete genome sequence of Methylococcus capsulatus (Bath).</title>
        <authorList>
            <person name="Ward N.L."/>
            <person name="Larsen O."/>
            <person name="Sakwa J."/>
            <person name="Bruseth L."/>
            <person name="Khouri H.M."/>
            <person name="Durkin A.S."/>
            <person name="Dimitrov G."/>
            <person name="Jiang L."/>
            <person name="Scanlan D."/>
            <person name="Kang K.H."/>
            <person name="Lewis M.R."/>
            <person name="Nelson K.E."/>
            <person name="Methe B.A."/>
            <person name="Wu M."/>
            <person name="Heidelberg J.F."/>
            <person name="Paulsen I.T."/>
            <person name="Fouts D.E."/>
            <person name="Ravel J."/>
            <person name="Tettelin H."/>
            <person name="Ren Q."/>
            <person name="Read T.D."/>
            <person name="DeBoy R.T."/>
            <person name="Seshadri R."/>
            <person name="Salzberg S.L."/>
            <person name="Jensen H.B."/>
            <person name="Birkeland N.K."/>
            <person name="Nelson W.C."/>
            <person name="Dodson R.J."/>
            <person name="Grindhaug S.H."/>
            <person name="Holt I.E."/>
            <person name="Eidhammer I."/>
            <person name="Jonasen I."/>
            <person name="Vanaken S."/>
            <person name="Utterback T.R."/>
            <person name="Feldblyum T.V."/>
            <person name="Fraser C.M."/>
            <person name="Lillehaug J.R."/>
            <person name="Eisen J.A."/>
        </authorList>
    </citation>
    <scope>NUCLEOTIDE SEQUENCE [LARGE SCALE GENOMIC DNA]</scope>
    <source>
        <strain>ATCC 33009 / NCIMB 11132 / Bath</strain>
    </source>
</reference>
<protein>
    <recommendedName>
        <fullName evidence="1">Ribosomal RNA small subunit methyltransferase G</fullName>
        <ecNumber evidence="1">2.1.1.170</ecNumber>
    </recommendedName>
    <alternativeName>
        <fullName evidence="1">16S rRNA 7-methylguanosine methyltransferase</fullName>
        <shortName evidence="1">16S rRNA m7G methyltransferase</shortName>
    </alternativeName>
</protein>
<accession>Q60CS4</accession>